<dbReference type="EMBL" id="AL590842">
    <property type="protein sequence ID" value="CAL20966.1"/>
    <property type="molecule type" value="Genomic_DNA"/>
</dbReference>
<dbReference type="EMBL" id="AE009952">
    <property type="protein sequence ID" value="AAM85560.1"/>
    <property type="status" value="ALT_INIT"/>
    <property type="molecule type" value="Genomic_DNA"/>
</dbReference>
<dbReference type="EMBL" id="AE017042">
    <property type="protein sequence ID" value="AAS62334.1"/>
    <property type="status" value="ALT_INIT"/>
    <property type="molecule type" value="Genomic_DNA"/>
</dbReference>
<dbReference type="PIR" id="AC0285">
    <property type="entry name" value="AC0285"/>
</dbReference>
<dbReference type="RefSeq" id="WP_002227906.1">
    <property type="nucleotide sequence ID" value="NZ_WUCM01000054.1"/>
</dbReference>
<dbReference type="RefSeq" id="YP_002347305.1">
    <property type="nucleotide sequence ID" value="NC_003143.1"/>
</dbReference>
<dbReference type="SMR" id="Q8ZE46"/>
<dbReference type="STRING" id="214092.YPO2338"/>
<dbReference type="PaxDb" id="214092-YPO2338"/>
<dbReference type="EnsemblBacteria" id="AAS62334">
    <property type="protein sequence ID" value="AAS62334"/>
    <property type="gene ID" value="YP_2125"/>
</dbReference>
<dbReference type="GeneID" id="57976336"/>
<dbReference type="KEGG" id="ype:YPO2338"/>
<dbReference type="KEGG" id="ypj:CH55_415"/>
<dbReference type="KEGG" id="ypk:y1994"/>
<dbReference type="KEGG" id="ypl:CH46_2768"/>
<dbReference type="KEGG" id="ypm:YP_2125"/>
<dbReference type="KEGG" id="ypv:BZ15_1189"/>
<dbReference type="KEGG" id="ypw:CH59_4169"/>
<dbReference type="PATRIC" id="fig|214092.21.peg.2744"/>
<dbReference type="eggNOG" id="COG0598">
    <property type="taxonomic scope" value="Bacteria"/>
</dbReference>
<dbReference type="HOGENOM" id="CLU_007127_2_0_6"/>
<dbReference type="OMA" id="MVSVRIF"/>
<dbReference type="OrthoDB" id="9803484at2"/>
<dbReference type="Proteomes" id="UP000000815">
    <property type="component" value="Chromosome"/>
</dbReference>
<dbReference type="Proteomes" id="UP000001019">
    <property type="component" value="Chromosome"/>
</dbReference>
<dbReference type="Proteomes" id="UP000002490">
    <property type="component" value="Chromosome"/>
</dbReference>
<dbReference type="GO" id="GO:0005886">
    <property type="term" value="C:plasma membrane"/>
    <property type="evidence" value="ECO:0000318"/>
    <property type="project" value="GO_Central"/>
</dbReference>
<dbReference type="GO" id="GO:0050897">
    <property type="term" value="F:cobalt ion binding"/>
    <property type="evidence" value="ECO:0000318"/>
    <property type="project" value="GO_Central"/>
</dbReference>
<dbReference type="GO" id="GO:0015087">
    <property type="term" value="F:cobalt ion transmembrane transporter activity"/>
    <property type="evidence" value="ECO:0000318"/>
    <property type="project" value="GO_Central"/>
</dbReference>
<dbReference type="GO" id="GO:0000287">
    <property type="term" value="F:magnesium ion binding"/>
    <property type="evidence" value="ECO:0000318"/>
    <property type="project" value="GO_Central"/>
</dbReference>
<dbReference type="GO" id="GO:0015095">
    <property type="term" value="F:magnesium ion transmembrane transporter activity"/>
    <property type="evidence" value="ECO:0000318"/>
    <property type="project" value="GO_Central"/>
</dbReference>
<dbReference type="GO" id="GO:0005385">
    <property type="term" value="F:zinc ion transmembrane transporter activity"/>
    <property type="evidence" value="ECO:0007669"/>
    <property type="project" value="UniProtKB-UniRule"/>
</dbReference>
<dbReference type="CDD" id="cd12833">
    <property type="entry name" value="ZntB-like_1"/>
    <property type="match status" value="1"/>
</dbReference>
<dbReference type="Gene3D" id="3.30.460.20">
    <property type="entry name" value="CorA soluble domain-like"/>
    <property type="match status" value="1"/>
</dbReference>
<dbReference type="Gene3D" id="1.20.58.340">
    <property type="entry name" value="Magnesium transport protein CorA, transmembrane region"/>
    <property type="match status" value="2"/>
</dbReference>
<dbReference type="HAMAP" id="MF_01565">
    <property type="entry name" value="ZntB"/>
    <property type="match status" value="1"/>
</dbReference>
<dbReference type="InterPro" id="IPR045861">
    <property type="entry name" value="CorA_cytoplasmic_dom"/>
</dbReference>
<dbReference type="InterPro" id="IPR045863">
    <property type="entry name" value="CorA_TM1_TM2"/>
</dbReference>
<dbReference type="InterPro" id="IPR002523">
    <property type="entry name" value="MgTranspt_CorA/ZnTranspt_ZntB"/>
</dbReference>
<dbReference type="InterPro" id="IPR023714">
    <property type="entry name" value="Zn_transp_ZntB"/>
</dbReference>
<dbReference type="NCBIfam" id="NF007092">
    <property type="entry name" value="PRK09546.1"/>
    <property type="match status" value="1"/>
</dbReference>
<dbReference type="PANTHER" id="PTHR46494">
    <property type="entry name" value="CORA FAMILY METAL ION TRANSPORTER (EUROFUNG)"/>
    <property type="match status" value="1"/>
</dbReference>
<dbReference type="PANTHER" id="PTHR46494:SF3">
    <property type="entry name" value="ZINC TRANSPORT PROTEIN ZNTB"/>
    <property type="match status" value="1"/>
</dbReference>
<dbReference type="Pfam" id="PF01544">
    <property type="entry name" value="CorA"/>
    <property type="match status" value="1"/>
</dbReference>
<dbReference type="SUPFAM" id="SSF143865">
    <property type="entry name" value="CorA soluble domain-like"/>
    <property type="match status" value="1"/>
</dbReference>
<dbReference type="SUPFAM" id="SSF144083">
    <property type="entry name" value="Magnesium transport protein CorA, transmembrane region"/>
    <property type="match status" value="1"/>
</dbReference>
<keyword id="KW-0997">Cell inner membrane</keyword>
<keyword id="KW-1003">Cell membrane</keyword>
<keyword id="KW-0406">Ion transport</keyword>
<keyword id="KW-0472">Membrane</keyword>
<keyword id="KW-1185">Reference proteome</keyword>
<keyword id="KW-0812">Transmembrane</keyword>
<keyword id="KW-1133">Transmembrane helix</keyword>
<keyword id="KW-0813">Transport</keyword>
<keyword id="KW-0862">Zinc</keyword>
<comment type="function">
    <text evidence="1">Zinc transporter. Acts as a Zn(2+):proton symporter, which likely mediates zinc ion uptake.</text>
</comment>
<comment type="catalytic activity">
    <reaction evidence="1">
        <text>Zn(2+)(out) + H(+)(out) = Zn(2+)(in) + H(+)(in)</text>
        <dbReference type="Rhea" id="RHEA:71195"/>
        <dbReference type="ChEBI" id="CHEBI:15378"/>
        <dbReference type="ChEBI" id="CHEBI:29105"/>
    </reaction>
    <physiologicalReaction direction="left-to-right" evidence="1">
        <dbReference type="Rhea" id="RHEA:71196"/>
    </physiologicalReaction>
</comment>
<comment type="subcellular location">
    <subcellularLocation>
        <location evidence="1">Cell inner membrane</location>
        <topology evidence="1">Multi-pass membrane protein</topology>
    </subcellularLocation>
</comment>
<comment type="similarity">
    <text evidence="1">Belongs to the CorA metal ion transporter (MIT) (TC 1.A.35) family.</text>
</comment>
<comment type="sequence caution" evidence="2">
    <conflict type="erroneous initiation">
        <sequence resource="EMBL-CDS" id="AAM85560"/>
    </conflict>
</comment>
<comment type="sequence caution" evidence="2">
    <conflict type="erroneous initiation">
        <sequence resource="EMBL-CDS" id="AAS62334"/>
    </conflict>
</comment>
<name>ZNTB_YERPE</name>
<gene>
    <name evidence="1" type="primary">zntB</name>
    <name type="ordered locus">YPO2338</name>
    <name type="ordered locus">y1994</name>
    <name type="ordered locus">YP_2125</name>
</gene>
<protein>
    <recommendedName>
        <fullName evidence="1">Zinc transport protein ZntB</fullName>
    </recommendedName>
</protein>
<organism>
    <name type="scientific">Yersinia pestis</name>
    <dbReference type="NCBI Taxonomy" id="632"/>
    <lineage>
        <taxon>Bacteria</taxon>
        <taxon>Pseudomonadati</taxon>
        <taxon>Pseudomonadota</taxon>
        <taxon>Gammaproteobacteria</taxon>
        <taxon>Enterobacterales</taxon>
        <taxon>Yersiniaceae</taxon>
        <taxon>Yersinia</taxon>
    </lineage>
</organism>
<evidence type="ECO:0000255" key="1">
    <source>
        <dbReference type="HAMAP-Rule" id="MF_01565"/>
    </source>
</evidence>
<evidence type="ECO:0000305" key="2"/>
<proteinExistence type="inferred from homology"/>
<accession>Q8ZE46</accession>
<accession>Q0WEI3</accession>
<accession>Q74TM7</accession>
<accession>Q8D0K8</accession>
<reference key="1">
    <citation type="journal article" date="2001" name="Nature">
        <title>Genome sequence of Yersinia pestis, the causative agent of plague.</title>
        <authorList>
            <person name="Parkhill J."/>
            <person name="Wren B.W."/>
            <person name="Thomson N.R."/>
            <person name="Titball R.W."/>
            <person name="Holden M.T.G."/>
            <person name="Prentice M.B."/>
            <person name="Sebaihia M."/>
            <person name="James K.D."/>
            <person name="Churcher C.M."/>
            <person name="Mungall K.L."/>
            <person name="Baker S."/>
            <person name="Basham D."/>
            <person name="Bentley S.D."/>
            <person name="Brooks K."/>
            <person name="Cerdeno-Tarraga A.-M."/>
            <person name="Chillingworth T."/>
            <person name="Cronin A."/>
            <person name="Davies R.M."/>
            <person name="Davis P."/>
            <person name="Dougan G."/>
            <person name="Feltwell T."/>
            <person name="Hamlin N."/>
            <person name="Holroyd S."/>
            <person name="Jagels K."/>
            <person name="Karlyshev A.V."/>
            <person name="Leather S."/>
            <person name="Moule S."/>
            <person name="Oyston P.C.F."/>
            <person name="Quail M.A."/>
            <person name="Rutherford K.M."/>
            <person name="Simmonds M."/>
            <person name="Skelton J."/>
            <person name="Stevens K."/>
            <person name="Whitehead S."/>
            <person name="Barrell B.G."/>
        </authorList>
    </citation>
    <scope>NUCLEOTIDE SEQUENCE [LARGE SCALE GENOMIC DNA]</scope>
    <source>
        <strain>CO-92 / Biovar Orientalis</strain>
    </source>
</reference>
<reference key="2">
    <citation type="journal article" date="2002" name="J. Bacteriol.">
        <title>Genome sequence of Yersinia pestis KIM.</title>
        <authorList>
            <person name="Deng W."/>
            <person name="Burland V."/>
            <person name="Plunkett G. III"/>
            <person name="Boutin A."/>
            <person name="Mayhew G.F."/>
            <person name="Liss P."/>
            <person name="Perna N.T."/>
            <person name="Rose D.J."/>
            <person name="Mau B."/>
            <person name="Zhou S."/>
            <person name="Schwartz D.C."/>
            <person name="Fetherston J.D."/>
            <person name="Lindler L.E."/>
            <person name="Brubaker R.R."/>
            <person name="Plano G.V."/>
            <person name="Straley S.C."/>
            <person name="McDonough K.A."/>
            <person name="Nilles M.L."/>
            <person name="Matson J.S."/>
            <person name="Blattner F.R."/>
            <person name="Perry R.D."/>
        </authorList>
    </citation>
    <scope>NUCLEOTIDE SEQUENCE [LARGE SCALE GENOMIC DNA]</scope>
    <source>
        <strain>KIM10+ / Biovar Mediaevalis</strain>
    </source>
</reference>
<reference key="3">
    <citation type="journal article" date="2004" name="DNA Res.">
        <title>Complete genome sequence of Yersinia pestis strain 91001, an isolate avirulent to humans.</title>
        <authorList>
            <person name="Song Y."/>
            <person name="Tong Z."/>
            <person name="Wang J."/>
            <person name="Wang L."/>
            <person name="Guo Z."/>
            <person name="Han Y."/>
            <person name="Zhang J."/>
            <person name="Pei D."/>
            <person name="Zhou D."/>
            <person name="Qin H."/>
            <person name="Pang X."/>
            <person name="Han Y."/>
            <person name="Zhai J."/>
            <person name="Li M."/>
            <person name="Cui B."/>
            <person name="Qi Z."/>
            <person name="Jin L."/>
            <person name="Dai R."/>
            <person name="Chen F."/>
            <person name="Li S."/>
            <person name="Ye C."/>
            <person name="Du Z."/>
            <person name="Lin W."/>
            <person name="Wang J."/>
            <person name="Yu J."/>
            <person name="Yang H."/>
            <person name="Wang J."/>
            <person name="Huang P."/>
            <person name="Yang R."/>
        </authorList>
    </citation>
    <scope>NUCLEOTIDE SEQUENCE [LARGE SCALE GENOMIC DNA]</scope>
    <source>
        <strain>91001 / Biovar Mediaevalis</strain>
    </source>
</reference>
<feature type="chain" id="PRO_0000239252" description="Zinc transport protein ZntB">
    <location>
        <begin position="1"/>
        <end position="327"/>
    </location>
</feature>
<feature type="topological domain" description="Cytoplasmic" evidence="1">
    <location>
        <begin position="1"/>
        <end position="271"/>
    </location>
</feature>
<feature type="transmembrane region" description="Helical" evidence="1">
    <location>
        <begin position="272"/>
        <end position="292"/>
    </location>
</feature>
<feature type="topological domain" description="Periplasmic" evidence="1">
    <location>
        <begin position="293"/>
        <end position="300"/>
    </location>
</feature>
<feature type="transmembrane region" description="Helical" evidence="1">
    <location>
        <begin position="301"/>
        <end position="321"/>
    </location>
</feature>
<feature type="topological domain" description="Cytoplasmic" evidence="1">
    <location>
        <begin position="322"/>
        <end position="327"/>
    </location>
</feature>
<sequence length="327" mass="36701">MDVVEGKALQVSDAVYAYQLDGKGGMTAISVDAVASATQPCWLHLDYTYPESAEWLQNTPLLPEVVRDGLAGESMRPKITRLGDGTMITLRGINFNNDARPDQLVTIRVYMTDKLIVSTRHRKVYSIDNVLNDLQSGTGPTGSGHWLVDIADGLTDHTSEFIEDLHDKIIDLEDDLMEQKVPPRGQMALLRKQLIVLRRYMAPQRDVFSRLASERLPWMNDDDRRRMQEISERLGRGLEDLDGSIARTAVLSDEISSLMADAMNRRTYTMSLLAMVFLPTTFLTGLFGVNLGGIPGNTDAFGFTIFCMMLVVLVLSVAWWLKRSKWL</sequence>